<proteinExistence type="inferred from homology"/>
<name>CYB_STEBR</name>
<protein>
    <recommendedName>
        <fullName>Cytochrome b</fullName>
    </recommendedName>
    <alternativeName>
        <fullName>Complex III subunit 3</fullName>
    </alternativeName>
    <alternativeName>
        <fullName>Complex III subunit III</fullName>
    </alternativeName>
    <alternativeName>
        <fullName>Cytochrome b-c1 complex subunit 3</fullName>
    </alternativeName>
    <alternativeName>
        <fullName>Ubiquinol-cytochrome-c reductase complex cytochrome b subunit</fullName>
    </alternativeName>
</protein>
<reference key="1">
    <citation type="journal article" date="1999" name="Mar. Mamm. Sci.">
        <title>Phylogenetic relationships among the delphinid cetaceans based on full cytochrome b sequences.</title>
        <authorList>
            <person name="LeDuc R.G."/>
            <person name="Perrin W.F."/>
            <person name="Dizon A.E."/>
        </authorList>
    </citation>
    <scope>NUCLEOTIDE SEQUENCE [GENOMIC DNA]</scope>
    <source>
        <strain>Isolate Atlantic ocean</strain>
    </source>
</reference>
<organism>
    <name type="scientific">Steno bredanensis</name>
    <name type="common">Rough-toothed dolphin</name>
    <name type="synonym">Delphinus bredanensis</name>
    <dbReference type="NCBI Taxonomy" id="46167"/>
    <lineage>
        <taxon>Eukaryota</taxon>
        <taxon>Metazoa</taxon>
        <taxon>Chordata</taxon>
        <taxon>Craniata</taxon>
        <taxon>Vertebrata</taxon>
        <taxon>Euteleostomi</taxon>
        <taxon>Mammalia</taxon>
        <taxon>Eutheria</taxon>
        <taxon>Laurasiatheria</taxon>
        <taxon>Artiodactyla</taxon>
        <taxon>Whippomorpha</taxon>
        <taxon>Cetacea</taxon>
        <taxon>Odontoceti</taxon>
        <taxon>Delphinidae</taxon>
        <taxon>Steno</taxon>
    </lineage>
</organism>
<gene>
    <name type="primary">MT-CYB</name>
    <name type="synonym">COB</name>
    <name type="synonym">CYTB</name>
    <name type="synonym">MTCYB</name>
</gene>
<comment type="function">
    <text evidence="2">Component of the ubiquinol-cytochrome c reductase complex (complex III or cytochrome b-c1 complex) that is part of the mitochondrial respiratory chain. The b-c1 complex mediates electron transfer from ubiquinol to cytochrome c. Contributes to the generation of a proton gradient across the mitochondrial membrane that is then used for ATP synthesis.</text>
</comment>
<comment type="cofactor">
    <cofactor evidence="2">
        <name>heme b</name>
        <dbReference type="ChEBI" id="CHEBI:60344"/>
    </cofactor>
    <text evidence="2">Binds 2 heme b groups non-covalently.</text>
</comment>
<comment type="subunit">
    <text evidence="2">The cytochrome bc1 complex contains 11 subunits: 3 respiratory subunits (MT-CYB, CYC1 and UQCRFS1), 2 core proteins (UQCRC1 and UQCRC2) and 6 low-molecular weight proteins (UQCRH/QCR6, UQCRB/QCR7, UQCRQ/QCR8, UQCR10/QCR9, UQCR11/QCR10 and a cleavage product of UQCRFS1). This cytochrome bc1 complex then forms a dimer.</text>
</comment>
<comment type="subcellular location">
    <subcellularLocation>
        <location evidence="2">Mitochondrion inner membrane</location>
        <topology evidence="2">Multi-pass membrane protein</topology>
    </subcellularLocation>
</comment>
<comment type="miscellaneous">
    <text evidence="1">Heme 1 (or BL or b562) is low-potential and absorbs at about 562 nm, and heme 2 (or BH or b566) is high-potential and absorbs at about 566 nm.</text>
</comment>
<comment type="similarity">
    <text evidence="3 4">Belongs to the cytochrome b family.</text>
</comment>
<comment type="caution">
    <text evidence="2">The full-length protein contains only eight transmembrane helices, not nine as predicted by bioinformatics tools.</text>
</comment>
<sequence>MTNIRKTHPLMKILNNAFIDLPTPSNISSWWNFGSLLGLCLIMQILTGLFLAMHYTPDTSTAFSSVAHICRDVNYGWFIRYLHANGASMFFICLYAHIGRGLYYGSYMFQETWNIGVLLLLTVMATAFVGYVLPWGQMSFWGATVITNLLSAIPYIGTTLVEWIWGGFSVDKATLTRFFAFHFILPFIIMALATVHLLFLHETGSNNPTGIPSNMDMIPFHPYYTIKDILGALLLILTLLALTLFTPDLLGDPDNYTPANPLSTPAHIKPEWYFLFAYAILRSIPNKLGGVLALLLSILILIFIPMLQTSKQRSMMFRPFSQLLFWTLIADLLTLTWIGGQPVEHPYIIVGQLASILYFLLILVLMPAVGLIENKLLKW</sequence>
<keyword id="KW-0249">Electron transport</keyword>
<keyword id="KW-0349">Heme</keyword>
<keyword id="KW-0408">Iron</keyword>
<keyword id="KW-0472">Membrane</keyword>
<keyword id="KW-0479">Metal-binding</keyword>
<keyword id="KW-0496">Mitochondrion</keyword>
<keyword id="KW-0999">Mitochondrion inner membrane</keyword>
<keyword id="KW-0679">Respiratory chain</keyword>
<keyword id="KW-0812">Transmembrane</keyword>
<keyword id="KW-1133">Transmembrane helix</keyword>
<keyword id="KW-0813">Transport</keyword>
<keyword id="KW-0830">Ubiquinone</keyword>
<evidence type="ECO:0000250" key="1"/>
<evidence type="ECO:0000250" key="2">
    <source>
        <dbReference type="UniProtKB" id="P00157"/>
    </source>
</evidence>
<evidence type="ECO:0000255" key="3">
    <source>
        <dbReference type="PROSITE-ProRule" id="PRU00967"/>
    </source>
</evidence>
<evidence type="ECO:0000255" key="4">
    <source>
        <dbReference type="PROSITE-ProRule" id="PRU00968"/>
    </source>
</evidence>
<geneLocation type="mitochondrion"/>
<feature type="chain" id="PRO_0000061612" description="Cytochrome b">
    <location>
        <begin position="1"/>
        <end position="379"/>
    </location>
</feature>
<feature type="transmembrane region" description="Helical" evidence="2">
    <location>
        <begin position="33"/>
        <end position="53"/>
    </location>
</feature>
<feature type="transmembrane region" description="Helical" evidence="2">
    <location>
        <begin position="77"/>
        <end position="98"/>
    </location>
</feature>
<feature type="transmembrane region" description="Helical" evidence="2">
    <location>
        <begin position="113"/>
        <end position="133"/>
    </location>
</feature>
<feature type="transmembrane region" description="Helical" evidence="2">
    <location>
        <begin position="178"/>
        <end position="198"/>
    </location>
</feature>
<feature type="transmembrane region" description="Helical" evidence="2">
    <location>
        <begin position="226"/>
        <end position="246"/>
    </location>
</feature>
<feature type="transmembrane region" description="Helical" evidence="2">
    <location>
        <begin position="288"/>
        <end position="308"/>
    </location>
</feature>
<feature type="transmembrane region" description="Helical" evidence="2">
    <location>
        <begin position="320"/>
        <end position="340"/>
    </location>
</feature>
<feature type="transmembrane region" description="Helical" evidence="2">
    <location>
        <begin position="347"/>
        <end position="367"/>
    </location>
</feature>
<feature type="binding site" description="axial binding residue" evidence="2">
    <location>
        <position position="83"/>
    </location>
    <ligand>
        <name>heme b</name>
        <dbReference type="ChEBI" id="CHEBI:60344"/>
        <label>b562</label>
    </ligand>
    <ligandPart>
        <name>Fe</name>
        <dbReference type="ChEBI" id="CHEBI:18248"/>
    </ligandPart>
</feature>
<feature type="binding site" description="axial binding residue" evidence="2">
    <location>
        <position position="97"/>
    </location>
    <ligand>
        <name>heme b</name>
        <dbReference type="ChEBI" id="CHEBI:60344"/>
        <label>b566</label>
    </ligand>
    <ligandPart>
        <name>Fe</name>
        <dbReference type="ChEBI" id="CHEBI:18248"/>
    </ligandPart>
</feature>
<feature type="binding site" description="axial binding residue" evidence="2">
    <location>
        <position position="182"/>
    </location>
    <ligand>
        <name>heme b</name>
        <dbReference type="ChEBI" id="CHEBI:60344"/>
        <label>b562</label>
    </ligand>
    <ligandPart>
        <name>Fe</name>
        <dbReference type="ChEBI" id="CHEBI:18248"/>
    </ligandPart>
</feature>
<feature type="binding site" description="axial binding residue" evidence="2">
    <location>
        <position position="196"/>
    </location>
    <ligand>
        <name>heme b</name>
        <dbReference type="ChEBI" id="CHEBI:60344"/>
        <label>b566</label>
    </ligand>
    <ligandPart>
        <name>Fe</name>
        <dbReference type="ChEBI" id="CHEBI:18248"/>
    </ligandPart>
</feature>
<feature type="binding site" evidence="2">
    <location>
        <position position="201"/>
    </location>
    <ligand>
        <name>a ubiquinone</name>
        <dbReference type="ChEBI" id="CHEBI:16389"/>
    </ligand>
</feature>
<feature type="sequence variant" description="In strain: Isolate Atlantic ocean.">
    <original>N</original>
    <variation>D</variation>
    <location>
        <position position="16"/>
    </location>
</feature>
<accession>Q9TDK9</accession>
<accession>Q9TDK8</accession>
<dbReference type="EMBL" id="AF084076">
    <property type="protein sequence ID" value="AAD54453.1"/>
    <property type="molecule type" value="Genomic_DNA"/>
</dbReference>
<dbReference type="EMBL" id="AF084077">
    <property type="protein sequence ID" value="AAD54454.1"/>
    <property type="molecule type" value="Genomic_DNA"/>
</dbReference>
<dbReference type="SMR" id="Q9TDK9"/>
<dbReference type="GO" id="GO:0005743">
    <property type="term" value="C:mitochondrial inner membrane"/>
    <property type="evidence" value="ECO:0007669"/>
    <property type="project" value="UniProtKB-SubCell"/>
</dbReference>
<dbReference type="GO" id="GO:0045275">
    <property type="term" value="C:respiratory chain complex III"/>
    <property type="evidence" value="ECO:0007669"/>
    <property type="project" value="InterPro"/>
</dbReference>
<dbReference type="GO" id="GO:0046872">
    <property type="term" value="F:metal ion binding"/>
    <property type="evidence" value="ECO:0007669"/>
    <property type="project" value="UniProtKB-KW"/>
</dbReference>
<dbReference type="GO" id="GO:0008121">
    <property type="term" value="F:ubiquinol-cytochrome-c reductase activity"/>
    <property type="evidence" value="ECO:0007669"/>
    <property type="project" value="InterPro"/>
</dbReference>
<dbReference type="GO" id="GO:0006122">
    <property type="term" value="P:mitochondrial electron transport, ubiquinol to cytochrome c"/>
    <property type="evidence" value="ECO:0007669"/>
    <property type="project" value="TreeGrafter"/>
</dbReference>
<dbReference type="CDD" id="cd00290">
    <property type="entry name" value="cytochrome_b_C"/>
    <property type="match status" value="1"/>
</dbReference>
<dbReference type="CDD" id="cd00284">
    <property type="entry name" value="Cytochrome_b_N"/>
    <property type="match status" value="1"/>
</dbReference>
<dbReference type="FunFam" id="1.20.810.10:FF:000002">
    <property type="entry name" value="Cytochrome b"/>
    <property type="match status" value="1"/>
</dbReference>
<dbReference type="Gene3D" id="1.20.810.10">
    <property type="entry name" value="Cytochrome Bc1 Complex, Chain C"/>
    <property type="match status" value="1"/>
</dbReference>
<dbReference type="InterPro" id="IPR005798">
    <property type="entry name" value="Cyt_b/b6_C"/>
</dbReference>
<dbReference type="InterPro" id="IPR036150">
    <property type="entry name" value="Cyt_b/b6_C_sf"/>
</dbReference>
<dbReference type="InterPro" id="IPR005797">
    <property type="entry name" value="Cyt_b/b6_N"/>
</dbReference>
<dbReference type="InterPro" id="IPR027387">
    <property type="entry name" value="Cytb/b6-like_sf"/>
</dbReference>
<dbReference type="InterPro" id="IPR030689">
    <property type="entry name" value="Cytochrome_b"/>
</dbReference>
<dbReference type="InterPro" id="IPR048260">
    <property type="entry name" value="Cytochrome_b_C_euk/bac"/>
</dbReference>
<dbReference type="InterPro" id="IPR048259">
    <property type="entry name" value="Cytochrome_b_N_euk/bac"/>
</dbReference>
<dbReference type="InterPro" id="IPR016174">
    <property type="entry name" value="Di-haem_cyt_TM"/>
</dbReference>
<dbReference type="PANTHER" id="PTHR19271">
    <property type="entry name" value="CYTOCHROME B"/>
    <property type="match status" value="1"/>
</dbReference>
<dbReference type="PANTHER" id="PTHR19271:SF16">
    <property type="entry name" value="CYTOCHROME B"/>
    <property type="match status" value="1"/>
</dbReference>
<dbReference type="Pfam" id="PF00032">
    <property type="entry name" value="Cytochrom_B_C"/>
    <property type="match status" value="1"/>
</dbReference>
<dbReference type="Pfam" id="PF00033">
    <property type="entry name" value="Cytochrome_B"/>
    <property type="match status" value="1"/>
</dbReference>
<dbReference type="PIRSF" id="PIRSF038885">
    <property type="entry name" value="COB"/>
    <property type="match status" value="1"/>
</dbReference>
<dbReference type="SUPFAM" id="SSF81648">
    <property type="entry name" value="a domain/subunit of cytochrome bc1 complex (Ubiquinol-cytochrome c reductase)"/>
    <property type="match status" value="1"/>
</dbReference>
<dbReference type="SUPFAM" id="SSF81342">
    <property type="entry name" value="Transmembrane di-heme cytochromes"/>
    <property type="match status" value="1"/>
</dbReference>
<dbReference type="PROSITE" id="PS51003">
    <property type="entry name" value="CYTB_CTER"/>
    <property type="match status" value="1"/>
</dbReference>
<dbReference type="PROSITE" id="PS51002">
    <property type="entry name" value="CYTB_NTER"/>
    <property type="match status" value="1"/>
</dbReference>